<feature type="chain" id="PRO_0000210993" description="NEDD8 ultimate buster 1">
    <location>
        <begin position="1"/>
        <end position="614"/>
    </location>
</feature>
<feature type="domain" description="UBA 1" evidence="4">
    <location>
        <begin position="373"/>
        <end position="413"/>
    </location>
</feature>
<feature type="domain" description="UBA 2" evidence="4">
    <location>
        <begin position="423"/>
        <end position="469"/>
    </location>
</feature>
<feature type="domain" description="UBA 3" evidence="4">
    <location>
        <begin position="488"/>
        <end position="528"/>
    </location>
</feature>
<feature type="region of interest" description="NEDD8-binding 1" evidence="1">
    <location>
        <begin position="426"/>
        <end position="473"/>
    </location>
</feature>
<feature type="region of interest" description="Disordered" evidence="5">
    <location>
        <begin position="531"/>
        <end position="590"/>
    </location>
</feature>
<feature type="region of interest" description="NEDD8-binding 2" evidence="1">
    <location>
        <begin position="549"/>
        <end position="597"/>
    </location>
</feature>
<feature type="coiled-coil region" evidence="3">
    <location>
        <begin position="36"/>
        <end position="71"/>
    </location>
</feature>
<feature type="coiled-coil region" evidence="3">
    <location>
        <begin position="151"/>
        <end position="206"/>
    </location>
</feature>
<feature type="short sequence motif" description="Nuclear localization signal" evidence="6">
    <location>
        <begin position="413"/>
        <end position="430"/>
    </location>
</feature>
<feature type="compositionally biased region" description="Low complexity" evidence="5">
    <location>
        <begin position="539"/>
        <end position="561"/>
    </location>
</feature>
<feature type="compositionally biased region" description="Acidic residues" evidence="5">
    <location>
        <begin position="562"/>
        <end position="590"/>
    </location>
</feature>
<feature type="strand" evidence="7">
    <location>
        <begin position="484"/>
        <end position="486"/>
    </location>
</feature>
<feature type="helix" evidence="7">
    <location>
        <begin position="491"/>
        <end position="500"/>
    </location>
</feature>
<feature type="helix" evidence="7">
    <location>
        <begin position="504"/>
        <end position="513"/>
    </location>
</feature>
<feature type="turn" evidence="7">
    <location>
        <begin position="514"/>
        <end position="516"/>
    </location>
</feature>
<feature type="helix" evidence="7">
    <location>
        <begin position="518"/>
        <end position="528"/>
    </location>
</feature>
<feature type="strand" evidence="7">
    <location>
        <begin position="536"/>
        <end position="538"/>
    </location>
</feature>
<proteinExistence type="evidence at protein level"/>
<evidence type="ECO:0000250" key="1"/>
<evidence type="ECO:0000250" key="2">
    <source>
        <dbReference type="UniProtKB" id="Q9Y5A7"/>
    </source>
</evidence>
<evidence type="ECO:0000255" key="3"/>
<evidence type="ECO:0000255" key="4">
    <source>
        <dbReference type="PROSITE-ProRule" id="PRU00212"/>
    </source>
</evidence>
<evidence type="ECO:0000256" key="5">
    <source>
        <dbReference type="SAM" id="MobiDB-lite"/>
    </source>
</evidence>
<evidence type="ECO:0000305" key="6"/>
<evidence type="ECO:0007829" key="7">
    <source>
        <dbReference type="PDB" id="1VEG"/>
    </source>
</evidence>
<keyword id="KW-0002">3D-structure</keyword>
<keyword id="KW-0175">Coiled coil</keyword>
<keyword id="KW-0539">Nucleus</keyword>
<keyword id="KW-1185">Reference proteome</keyword>
<keyword id="KW-0677">Repeat</keyword>
<accession>P54729</accession>
<accession>Q8K3U0</accession>
<name>NUB1_MOUSE</name>
<dbReference type="EMBL" id="U27462">
    <property type="protein sequence ID" value="AAA68612.1"/>
    <property type="status" value="ALT_FRAME"/>
    <property type="molecule type" value="mRNA"/>
</dbReference>
<dbReference type="EMBL" id="AF534114">
    <property type="protein sequence ID" value="AAM97686.1"/>
    <property type="molecule type" value="mRNA"/>
</dbReference>
<dbReference type="EMBL" id="BC037451">
    <property type="protein sequence ID" value="AAH37451.1"/>
    <property type="molecule type" value="mRNA"/>
</dbReference>
<dbReference type="CCDS" id="CCDS39030.1"/>
<dbReference type="RefSeq" id="NP_058016.2">
    <property type="nucleotide sequence ID" value="NM_016736.3"/>
</dbReference>
<dbReference type="PDB" id="1VEG">
    <property type="method" value="NMR"/>
    <property type="chains" value="A=469-538"/>
</dbReference>
<dbReference type="PDBsum" id="1VEG"/>
<dbReference type="SMR" id="P54729"/>
<dbReference type="BioGRID" id="207276">
    <property type="interactions" value="4"/>
</dbReference>
<dbReference type="FunCoup" id="P54729">
    <property type="interactions" value="4004"/>
</dbReference>
<dbReference type="STRING" id="10090.ENSMUSP00000143657"/>
<dbReference type="GlyGen" id="P54729">
    <property type="glycosylation" value="3 sites, 1 N-linked glycan (1 site), 1 O-linked glycan (1 site)"/>
</dbReference>
<dbReference type="iPTMnet" id="P54729"/>
<dbReference type="PhosphoSitePlus" id="P54729"/>
<dbReference type="jPOST" id="P54729"/>
<dbReference type="PaxDb" id="10090-ENSMUSP00000070265"/>
<dbReference type="PeptideAtlas" id="P54729"/>
<dbReference type="ProteomicsDB" id="293803"/>
<dbReference type="Pumba" id="P54729"/>
<dbReference type="Antibodypedia" id="33007">
    <property type="antibodies" value="379 antibodies from 31 providers"/>
</dbReference>
<dbReference type="DNASU" id="53312"/>
<dbReference type="Ensembl" id="ENSMUST00000068825.8">
    <property type="protein sequence ID" value="ENSMUSP00000070265.7"/>
    <property type="gene ID" value="ENSMUSG00000028954.12"/>
</dbReference>
<dbReference type="GeneID" id="53312"/>
<dbReference type="KEGG" id="mmu:53312"/>
<dbReference type="UCSC" id="uc008wsf.2">
    <property type="organism name" value="mouse"/>
</dbReference>
<dbReference type="AGR" id="MGI:1889001"/>
<dbReference type="CTD" id="51667"/>
<dbReference type="MGI" id="MGI:1889001">
    <property type="gene designation" value="Nub1"/>
</dbReference>
<dbReference type="VEuPathDB" id="HostDB:ENSMUSG00000028954"/>
<dbReference type="eggNOG" id="KOG2561">
    <property type="taxonomic scope" value="Eukaryota"/>
</dbReference>
<dbReference type="GeneTree" id="ENSGT00390000010557"/>
<dbReference type="HOGENOM" id="CLU_030806_0_0_1"/>
<dbReference type="InParanoid" id="P54729"/>
<dbReference type="OrthoDB" id="434245at2759"/>
<dbReference type="PhylomeDB" id="P54729"/>
<dbReference type="TreeFam" id="TF323449"/>
<dbReference type="Reactome" id="R-MMU-8951664">
    <property type="pathway name" value="Neddylation"/>
</dbReference>
<dbReference type="BioGRID-ORCS" id="53312">
    <property type="hits" value="3 hits in 61 CRISPR screens"/>
</dbReference>
<dbReference type="ChiTaRS" id="Nub1">
    <property type="organism name" value="mouse"/>
</dbReference>
<dbReference type="EvolutionaryTrace" id="P54729"/>
<dbReference type="PRO" id="PR:P54729"/>
<dbReference type="Proteomes" id="UP000000589">
    <property type="component" value="Chromosome 5"/>
</dbReference>
<dbReference type="RNAct" id="P54729">
    <property type="molecule type" value="protein"/>
</dbReference>
<dbReference type="Bgee" id="ENSMUSG00000028954">
    <property type="expression patterns" value="Expressed in blastoderm cell in morula and 263 other cell types or tissues"/>
</dbReference>
<dbReference type="ExpressionAtlas" id="P54729">
    <property type="expression patterns" value="baseline and differential"/>
</dbReference>
<dbReference type="GO" id="GO:0005829">
    <property type="term" value="C:cytosol"/>
    <property type="evidence" value="ECO:0007669"/>
    <property type="project" value="Ensembl"/>
</dbReference>
<dbReference type="GO" id="GO:0097413">
    <property type="term" value="C:Lewy body"/>
    <property type="evidence" value="ECO:0000314"/>
    <property type="project" value="MGI"/>
</dbReference>
<dbReference type="GO" id="GO:0005730">
    <property type="term" value="C:nucleolus"/>
    <property type="evidence" value="ECO:0007669"/>
    <property type="project" value="Ensembl"/>
</dbReference>
<dbReference type="GO" id="GO:0005654">
    <property type="term" value="C:nucleoplasm"/>
    <property type="evidence" value="ECO:0007669"/>
    <property type="project" value="Ensembl"/>
</dbReference>
<dbReference type="GO" id="GO:0005634">
    <property type="term" value="C:nucleus"/>
    <property type="evidence" value="ECO:0000314"/>
    <property type="project" value="MGI"/>
</dbReference>
<dbReference type="GO" id="GO:0032436">
    <property type="term" value="P:positive regulation of proteasomal ubiquitin-dependent protein catabolic process"/>
    <property type="evidence" value="ECO:0000250"/>
    <property type="project" value="UniProtKB"/>
</dbReference>
<dbReference type="GO" id="GO:0010498">
    <property type="term" value="P:proteasomal protein catabolic process"/>
    <property type="evidence" value="ECO:0000314"/>
    <property type="project" value="MGI"/>
</dbReference>
<dbReference type="GO" id="GO:0016567">
    <property type="term" value="P:protein ubiquitination"/>
    <property type="evidence" value="ECO:0000250"/>
    <property type="project" value="UniProtKB"/>
</dbReference>
<dbReference type="GO" id="GO:0034612">
    <property type="term" value="P:response to tumor necrosis factor"/>
    <property type="evidence" value="ECO:0007669"/>
    <property type="project" value="Ensembl"/>
</dbReference>
<dbReference type="GO" id="GO:0034341">
    <property type="term" value="P:response to type II interferon"/>
    <property type="evidence" value="ECO:0007669"/>
    <property type="project" value="Ensembl"/>
</dbReference>
<dbReference type="GO" id="GO:0006511">
    <property type="term" value="P:ubiquitin-dependent protein catabolic process"/>
    <property type="evidence" value="ECO:0000250"/>
    <property type="project" value="UniProtKB"/>
</dbReference>
<dbReference type="CDD" id="cd14291">
    <property type="entry name" value="UBA1_NUB1_like"/>
    <property type="match status" value="1"/>
</dbReference>
<dbReference type="CDD" id="cd14293">
    <property type="entry name" value="UBA3_NUB1"/>
    <property type="match status" value="1"/>
</dbReference>
<dbReference type="CDD" id="cd17062">
    <property type="entry name" value="Ubl_NUB1"/>
    <property type="match status" value="1"/>
</dbReference>
<dbReference type="FunFam" id="3.10.20.90:FF:000151">
    <property type="entry name" value="NEDD8 ultimate buster 1 isoform X1"/>
    <property type="match status" value="1"/>
</dbReference>
<dbReference type="Gene3D" id="1.10.8.10">
    <property type="entry name" value="DNA helicase RuvA subunit, C-terminal domain"/>
    <property type="match status" value="3"/>
</dbReference>
<dbReference type="Gene3D" id="3.10.20.90">
    <property type="entry name" value="Phosphatidylinositol 3-kinase Catalytic Subunit, Chain A, domain 1"/>
    <property type="match status" value="1"/>
</dbReference>
<dbReference type="InterPro" id="IPR039749">
    <property type="entry name" value="NUB1"/>
</dbReference>
<dbReference type="InterPro" id="IPR041207">
    <property type="entry name" value="NUB1_ubiquitin-like_dom"/>
</dbReference>
<dbReference type="InterPro" id="IPR011990">
    <property type="entry name" value="TPR-like_helical_dom_sf"/>
</dbReference>
<dbReference type="InterPro" id="IPR015940">
    <property type="entry name" value="UBA"/>
</dbReference>
<dbReference type="InterPro" id="IPR009060">
    <property type="entry name" value="UBA-like_sf"/>
</dbReference>
<dbReference type="InterPro" id="IPR029071">
    <property type="entry name" value="Ubiquitin-like_domsf"/>
</dbReference>
<dbReference type="PANTHER" id="PTHR12948:SF3">
    <property type="entry name" value="NEDD8 ULTIMATE BUSTER 1"/>
    <property type="match status" value="1"/>
</dbReference>
<dbReference type="PANTHER" id="PTHR12948">
    <property type="entry name" value="NEDD8 ULTIMATE BUSTER-1 BS4 PROTEIN"/>
    <property type="match status" value="1"/>
</dbReference>
<dbReference type="Pfam" id="PF00627">
    <property type="entry name" value="UBA"/>
    <property type="match status" value="3"/>
</dbReference>
<dbReference type="Pfam" id="PF18037">
    <property type="entry name" value="Ubiquitin_5"/>
    <property type="match status" value="1"/>
</dbReference>
<dbReference type="SMART" id="SM00165">
    <property type="entry name" value="UBA"/>
    <property type="match status" value="3"/>
</dbReference>
<dbReference type="SUPFAM" id="SSF48452">
    <property type="entry name" value="TPR-like"/>
    <property type="match status" value="1"/>
</dbReference>
<dbReference type="SUPFAM" id="SSF46934">
    <property type="entry name" value="UBA-like"/>
    <property type="match status" value="3"/>
</dbReference>
<dbReference type="SUPFAM" id="SSF54236">
    <property type="entry name" value="Ubiquitin-like"/>
    <property type="match status" value="1"/>
</dbReference>
<dbReference type="PROSITE" id="PS50030">
    <property type="entry name" value="UBA"/>
    <property type="match status" value="3"/>
</dbReference>
<gene>
    <name type="primary">Nub1</name>
    <name type="synonym">Nyren18</name>
</gene>
<comment type="function">
    <text evidence="1">Specific down-regulator of the NEDD8 conjugation system. Recruits NEDD8, UBD, and their conjugates to the proteasome for degradation (By similarity).</text>
</comment>
<comment type="subunit">
    <text evidence="2">Directly interacts with NEDD8 and PSMD4/S5a, a member of the regulatory subunit of the 26S proteasome. Interacts with AIPL1. The interaction with UBD via UBA domains facilitates the linking of UBD-conjugated target protein to the proteasome complex and accelerates UBD degradation and that of its conjugates (By similarity).</text>
</comment>
<comment type="subcellular location">
    <subcellularLocation>
        <location evidence="1">Nucleus</location>
    </subcellularLocation>
    <text evidence="1">Predominantly nuclear.</text>
</comment>
<comment type="developmental stage">
    <text>Strongest expression at 7 dpc. Marked decrease 11, 15 and 17 dpc.</text>
</comment>
<comment type="induction">
    <text>By interferon.</text>
</comment>
<comment type="sequence caution" evidence="6">
    <conflict type="frameshift">
        <sequence resource="EMBL-CDS" id="AAA68612"/>
    </conflict>
</comment>
<reference key="1">
    <citation type="submission" date="1995-06" db="EMBL/GenBank/DDBJ databases">
        <title>BS4: an interferon inducible gene with novel regulatory properties.</title>
        <authorList>
            <person name="Shan B."/>
            <person name="Parsa A.T."/>
            <person name="Lewis J.A."/>
        </authorList>
    </citation>
    <scope>NUCLEOTIDE SEQUENCE [MRNA]</scope>
    <source>
        <tissue>Fibroblast</tissue>
    </source>
</reference>
<reference key="2">
    <citation type="journal article" date="2003" name="J. Biol. Chem.">
        <title>Regulation of the NEDD8 conjugation system by a splicing variant, NUB1L.</title>
        <authorList>
            <person name="Tanaka T."/>
            <person name="Kawashima H."/>
            <person name="Yeh E.T.H."/>
            <person name="Kamitani T."/>
        </authorList>
    </citation>
    <scope>NUCLEOTIDE SEQUENCE [MRNA]</scope>
    <source>
        <strain>BALB/cJ</strain>
        <tissue>Testis</tissue>
    </source>
</reference>
<reference key="3">
    <citation type="journal article" date="2004" name="Genome Res.">
        <title>The status, quality, and expansion of the NIH full-length cDNA project: the Mammalian Gene Collection (MGC).</title>
        <authorList>
            <consortium name="The MGC Project Team"/>
        </authorList>
    </citation>
    <scope>NUCLEOTIDE SEQUENCE [LARGE SCALE MRNA]</scope>
    <source>
        <strain>Czech II</strain>
        <tissue>Mammary tumor</tissue>
    </source>
</reference>
<reference key="4">
    <citation type="journal article" date="2010" name="Cell">
        <title>A tissue-specific atlas of mouse protein phosphorylation and expression.</title>
        <authorList>
            <person name="Huttlin E.L."/>
            <person name="Jedrychowski M.P."/>
            <person name="Elias J.E."/>
            <person name="Goswami T."/>
            <person name="Rad R."/>
            <person name="Beausoleil S.A."/>
            <person name="Villen J."/>
            <person name="Haas W."/>
            <person name="Sowa M.E."/>
            <person name="Gygi S.P."/>
        </authorList>
    </citation>
    <scope>IDENTIFICATION BY MASS SPECTROMETRY [LARGE SCALE ANALYSIS]</scope>
    <source>
        <tissue>Brain</tissue>
        <tissue>Brown adipose tissue</tissue>
        <tissue>Heart</tissue>
        <tissue>Kidney</tissue>
        <tissue>Liver</tissue>
        <tissue>Lung</tissue>
        <tissue>Pancreas</tissue>
        <tissue>Spleen</tissue>
        <tissue>Testis</tissue>
    </source>
</reference>
<reference key="5">
    <citation type="submission" date="2004-09" db="PDB data bank">
        <title>Solution structure of RSGI RUH-012, a UBA domain from mouse cDNA.</title>
        <authorList>
            <consortium name="RIKEN structural genomics initiative (RSGI)"/>
        </authorList>
    </citation>
    <scope>STRUCTURE BY NMR OF 469-538</scope>
</reference>
<sequence length="614" mass="70307">MAQKKYLQAKLTQFLREDRIQLWKPPYTKENKEVGLAVKDLAKKYSERLECCENEVENIIEEIRRKAIERGTGNEHYRTTGIATIEVFLPPRLRKHDKKSLLETRLHVTGRDLRCQIAETFGFQENYIKIVINKKQLQLGKSLEEQGVTHNVKAMVLELKQSEEDVRKNLQLEEEEQNEAELKERRIQRTKRGLEILAERAEMVVDPETMPYLDIANQTGRSLRIPPAERKALMLAMGYHEKGRAFLKRKEYGIALPCLLDADRYFCECKELLDTVDNYAVLQLDIVWCYFRLEQLECLDDAEKKLNLAQKCFKNCYGENHQRLVHIKGNCGKEKVLFLRLYLLQGIQNYHSGNGEEAREYLNKARQLFKELYIDPSKVHNLLQLGFTAQEARLGLRACDGNVDHAATHISNRREELAQIRKEEKEKRRRRLENVNTLRGMGYSTQAAKQALHQARGNLDDALKVLLSNPHMWWLQDADPENNSRQASPSQESINQLVYMGFDTVVAEAALRVFGGNVQLAAQTLAHHGGSLPPDLQFSGEDSSPTPSTSPSDSAGTSSASTDEDMETEAVNEILEDIPEHEEDYLDSTLEDEEVIIAEYLSYVESISSAAKNN</sequence>
<protein>
    <recommendedName>
        <fullName>NEDD8 ultimate buster 1</fullName>
    </recommendedName>
    <alternativeName>
        <fullName>Negative regulator of ubiquitin-like proteins 1</fullName>
    </alternativeName>
    <alternativeName>
        <fullName>Protein BS4</fullName>
    </alternativeName>
</protein>
<organism>
    <name type="scientific">Mus musculus</name>
    <name type="common">Mouse</name>
    <dbReference type="NCBI Taxonomy" id="10090"/>
    <lineage>
        <taxon>Eukaryota</taxon>
        <taxon>Metazoa</taxon>
        <taxon>Chordata</taxon>
        <taxon>Craniata</taxon>
        <taxon>Vertebrata</taxon>
        <taxon>Euteleostomi</taxon>
        <taxon>Mammalia</taxon>
        <taxon>Eutheria</taxon>
        <taxon>Euarchontoglires</taxon>
        <taxon>Glires</taxon>
        <taxon>Rodentia</taxon>
        <taxon>Myomorpha</taxon>
        <taxon>Muroidea</taxon>
        <taxon>Muridae</taxon>
        <taxon>Murinae</taxon>
        <taxon>Mus</taxon>
        <taxon>Mus</taxon>
    </lineage>
</organism>